<keyword id="KW-1003">Cell membrane</keyword>
<keyword id="KW-0472">Membrane</keyword>
<keyword id="KW-0675">Receptor</keyword>
<keyword id="KW-1185">Reference proteome</keyword>
<keyword id="KW-0807">Transducer</keyword>
<keyword id="KW-0812">Transmembrane</keyword>
<keyword id="KW-1133">Transmembrane helix</keyword>
<dbReference type="EMBL" id="AE014297">
    <property type="protein sequence ID" value="AAF56717.2"/>
    <property type="molecule type" value="Genomic_DNA"/>
</dbReference>
<dbReference type="RefSeq" id="NP_733213.1">
    <property type="nucleotide sequence ID" value="NM_170334.1"/>
</dbReference>
<dbReference type="SMR" id="Q9VB26"/>
<dbReference type="FunCoup" id="Q9VB26">
    <property type="interactions" value="15"/>
</dbReference>
<dbReference type="STRING" id="7227.FBpp0084556"/>
<dbReference type="PaxDb" id="7227-FBpp0084556"/>
<dbReference type="EnsemblMetazoa" id="FBtr0085186">
    <property type="protein sequence ID" value="FBpp0084556"/>
    <property type="gene ID" value="FBgn0046887"/>
</dbReference>
<dbReference type="GeneID" id="117327"/>
<dbReference type="KEGG" id="dme:Dmel_CG31059"/>
<dbReference type="AGR" id="FB:FBgn0046887"/>
<dbReference type="CTD" id="117327"/>
<dbReference type="FlyBase" id="FBgn0046887">
    <property type="gene designation" value="Gr98b"/>
</dbReference>
<dbReference type="VEuPathDB" id="VectorBase:FBgn0046887"/>
<dbReference type="eggNOG" id="ENOG502T7X7">
    <property type="taxonomic scope" value="Eukaryota"/>
</dbReference>
<dbReference type="GeneTree" id="ENSGT00940000166130"/>
<dbReference type="HOGENOM" id="CLU_682014_0_0_1"/>
<dbReference type="InParanoid" id="Q9VB26"/>
<dbReference type="OMA" id="INPLVAC"/>
<dbReference type="OrthoDB" id="6366728at2759"/>
<dbReference type="PhylomeDB" id="Q9VB26"/>
<dbReference type="BioGRID-ORCS" id="117327">
    <property type="hits" value="0 hits in 1 CRISPR screen"/>
</dbReference>
<dbReference type="ChiTaRS" id="Gr98b">
    <property type="organism name" value="fly"/>
</dbReference>
<dbReference type="GenomeRNAi" id="117327"/>
<dbReference type="PRO" id="PR:Q9VB26"/>
<dbReference type="Proteomes" id="UP000000803">
    <property type="component" value="Chromosome 3R"/>
</dbReference>
<dbReference type="Bgee" id="FBgn0046887">
    <property type="expression patterns" value="Expressed in gustatory receptor neuron (Drosophila)"/>
</dbReference>
<dbReference type="ExpressionAtlas" id="Q9VB26">
    <property type="expression patterns" value="baseline and differential"/>
</dbReference>
<dbReference type="GO" id="GO:0030424">
    <property type="term" value="C:axon"/>
    <property type="evidence" value="ECO:0000318"/>
    <property type="project" value="GO_Central"/>
</dbReference>
<dbReference type="GO" id="GO:0030425">
    <property type="term" value="C:dendrite"/>
    <property type="evidence" value="ECO:0000318"/>
    <property type="project" value="GO_Central"/>
</dbReference>
<dbReference type="GO" id="GO:0016020">
    <property type="term" value="C:membrane"/>
    <property type="evidence" value="ECO:0000303"/>
    <property type="project" value="UniProtKB"/>
</dbReference>
<dbReference type="GO" id="GO:0043025">
    <property type="term" value="C:neuronal cell body"/>
    <property type="evidence" value="ECO:0000318"/>
    <property type="project" value="GO_Central"/>
</dbReference>
<dbReference type="GO" id="GO:0005886">
    <property type="term" value="C:plasma membrane"/>
    <property type="evidence" value="ECO:0000250"/>
    <property type="project" value="FlyBase"/>
</dbReference>
<dbReference type="GO" id="GO:0015276">
    <property type="term" value="F:ligand-gated monoatomic ion channel activity"/>
    <property type="evidence" value="ECO:0000250"/>
    <property type="project" value="FlyBase"/>
</dbReference>
<dbReference type="GO" id="GO:0034220">
    <property type="term" value="P:monoatomic ion transmembrane transport"/>
    <property type="evidence" value="ECO:0000250"/>
    <property type="project" value="FlyBase"/>
</dbReference>
<dbReference type="GO" id="GO:1901354">
    <property type="term" value="P:response to L-canavanine"/>
    <property type="evidence" value="ECO:0000315"/>
    <property type="project" value="FlyBase"/>
</dbReference>
<dbReference type="GO" id="GO:0050909">
    <property type="term" value="P:sensory perception of taste"/>
    <property type="evidence" value="ECO:0007669"/>
    <property type="project" value="InterPro"/>
</dbReference>
<dbReference type="GO" id="GO:0007165">
    <property type="term" value="P:signal transduction"/>
    <property type="evidence" value="ECO:0007669"/>
    <property type="project" value="UniProtKB-KW"/>
</dbReference>
<dbReference type="InterPro" id="IPR013604">
    <property type="entry name" value="7TM_chemorcpt"/>
</dbReference>
<dbReference type="PANTHER" id="PTHR21143:SF131">
    <property type="entry name" value="GUSTATORY AND ODORANT RECEPTOR 63A-RELATED"/>
    <property type="match status" value="1"/>
</dbReference>
<dbReference type="PANTHER" id="PTHR21143">
    <property type="entry name" value="INVERTEBRATE GUSTATORY RECEPTOR"/>
    <property type="match status" value="1"/>
</dbReference>
<dbReference type="Pfam" id="PF08395">
    <property type="entry name" value="7tm_7"/>
    <property type="match status" value="1"/>
</dbReference>
<proteinExistence type="inferred from homology"/>
<organism evidence="4">
    <name type="scientific">Drosophila melanogaster</name>
    <name type="common">Fruit fly</name>
    <dbReference type="NCBI Taxonomy" id="7227"/>
    <lineage>
        <taxon>Eukaryota</taxon>
        <taxon>Metazoa</taxon>
        <taxon>Ecdysozoa</taxon>
        <taxon>Arthropoda</taxon>
        <taxon>Hexapoda</taxon>
        <taxon>Insecta</taxon>
        <taxon>Pterygota</taxon>
        <taxon>Neoptera</taxon>
        <taxon>Endopterygota</taxon>
        <taxon>Diptera</taxon>
        <taxon>Brachycera</taxon>
        <taxon>Muscomorpha</taxon>
        <taxon>Ephydroidea</taxon>
        <taxon>Drosophilidae</taxon>
        <taxon>Drosophila</taxon>
        <taxon>Sophophora</taxon>
    </lineage>
</organism>
<sequence>MVAQKSRLLARAFPYLDIFSVFALTPPPQSFGHTPHRRLRWYLMTGYVFYATAILATVFIVSYFNIIAIDEEVLEYNVSDFTRVMGNIQKSLYSIMAIANHLNMLINYRRLGGIYKDIADLEMDMDEASQCFGGQRQRFSFRFRMALCVGVWMILMVGSMPRLTMTAMGPFVSTLLKILTEFVMIMQQLKSLEYCVFVLIIYELVLRLRRTLSQLQEEFQDCEQQDMLQALCVALKRNQLLLGRIWRLEGDVGSYFTPTMLLLFLYNGLTILHMVNWAYINKFLYDSCCQYERFLVCSTLLVNLLLPCLLSQRCINAYNCFPRILHKIRCTSADPNFAMLTRGLREYSLQMEHLKLRFTCGGLFDINLKYFGGLLVTIFGYIIILIQFKVQAIAANRYKKVVN</sequence>
<protein>
    <recommendedName>
        <fullName>Putative gustatory receptor 98b</fullName>
    </recommendedName>
</protein>
<accession>Q9VB26</accession>
<gene>
    <name type="primary">Gr98b</name>
    <name type="synonym">GR98B.2</name>
    <name type="ORF">CG31059</name>
</gene>
<comment type="function">
    <text evidence="1">Probable gustatory receptor which mediates acceptance or avoidance behavior, depending on its substrates.</text>
</comment>
<comment type="subcellular location">
    <subcellularLocation>
        <location evidence="1">Cell membrane</location>
        <topology evidence="1">Multi-pass membrane protein</topology>
    </subcellularLocation>
</comment>
<comment type="similarity">
    <text evidence="3">Belongs to the insect chemoreceptor superfamily. Gustatory receptor (GR) family. Gr2a subfamily.</text>
</comment>
<feature type="chain" id="PRO_0000216547" description="Putative gustatory receptor 98b">
    <location>
        <begin position="1"/>
        <end position="403"/>
    </location>
</feature>
<feature type="topological domain" description="Cytoplasmic" evidence="1">
    <location>
        <begin position="1"/>
        <end position="11"/>
    </location>
</feature>
<feature type="transmembrane region" description="Helical; Name=1" evidence="2">
    <location>
        <begin position="12"/>
        <end position="32"/>
    </location>
</feature>
<feature type="topological domain" description="Extracellular" evidence="1">
    <location>
        <begin position="33"/>
        <end position="48"/>
    </location>
</feature>
<feature type="transmembrane region" description="Helical; Name=2" evidence="2">
    <location>
        <begin position="49"/>
        <end position="69"/>
    </location>
</feature>
<feature type="topological domain" description="Cytoplasmic" evidence="1">
    <location>
        <begin position="70"/>
        <end position="83"/>
    </location>
</feature>
<feature type="transmembrane region" description="Helical; Name=3" evidence="2">
    <location>
        <begin position="84"/>
        <end position="104"/>
    </location>
</feature>
<feature type="topological domain" description="Extracellular" evidence="1">
    <location>
        <begin position="105"/>
        <end position="144"/>
    </location>
</feature>
<feature type="transmembrane region" description="Helical; Name=4" evidence="2">
    <location>
        <begin position="145"/>
        <end position="165"/>
    </location>
</feature>
<feature type="topological domain" description="Cytoplasmic" evidence="1">
    <location>
        <begin position="166"/>
        <end position="191"/>
    </location>
</feature>
<feature type="transmembrane region" description="Helical; Name=5" evidence="2">
    <location>
        <begin position="192"/>
        <end position="212"/>
    </location>
</feature>
<feature type="topological domain" description="Extracellular" evidence="1">
    <location>
        <begin position="213"/>
        <end position="259"/>
    </location>
</feature>
<feature type="transmembrane region" description="Helical; Name=6" evidence="2">
    <location>
        <begin position="260"/>
        <end position="280"/>
    </location>
</feature>
<feature type="topological domain" description="Cytoplasmic" evidence="1">
    <location>
        <begin position="281"/>
        <end position="365"/>
    </location>
</feature>
<feature type="transmembrane region" description="Helical; Name=7" evidence="2">
    <location>
        <begin position="366"/>
        <end position="386"/>
    </location>
</feature>
<feature type="topological domain" description="Extracellular" evidence="1">
    <location>
        <begin position="387"/>
        <end position="403"/>
    </location>
</feature>
<evidence type="ECO:0000250" key="1"/>
<evidence type="ECO:0000255" key="2"/>
<evidence type="ECO:0000305" key="3"/>
<evidence type="ECO:0000312" key="4">
    <source>
        <dbReference type="EMBL" id="AAF56717.2"/>
    </source>
</evidence>
<name>GR98B_DROME</name>
<reference evidence="3" key="1">
    <citation type="journal article" date="2000" name="Science">
        <title>The genome sequence of Drosophila melanogaster.</title>
        <authorList>
            <person name="Adams M.D."/>
            <person name="Celniker S.E."/>
            <person name="Holt R.A."/>
            <person name="Evans C.A."/>
            <person name="Gocayne J.D."/>
            <person name="Amanatides P.G."/>
            <person name="Scherer S.E."/>
            <person name="Li P.W."/>
            <person name="Hoskins R.A."/>
            <person name="Galle R.F."/>
            <person name="George R.A."/>
            <person name="Lewis S.E."/>
            <person name="Richards S."/>
            <person name="Ashburner M."/>
            <person name="Henderson S.N."/>
            <person name="Sutton G.G."/>
            <person name="Wortman J.R."/>
            <person name="Yandell M.D."/>
            <person name="Zhang Q."/>
            <person name="Chen L.X."/>
            <person name="Brandon R.C."/>
            <person name="Rogers Y.-H.C."/>
            <person name="Blazej R.G."/>
            <person name="Champe M."/>
            <person name="Pfeiffer B.D."/>
            <person name="Wan K.H."/>
            <person name="Doyle C."/>
            <person name="Baxter E.G."/>
            <person name="Helt G."/>
            <person name="Nelson C.R."/>
            <person name="Miklos G.L.G."/>
            <person name="Abril J.F."/>
            <person name="Agbayani A."/>
            <person name="An H.-J."/>
            <person name="Andrews-Pfannkoch C."/>
            <person name="Baldwin D."/>
            <person name="Ballew R.M."/>
            <person name="Basu A."/>
            <person name="Baxendale J."/>
            <person name="Bayraktaroglu L."/>
            <person name="Beasley E.M."/>
            <person name="Beeson K.Y."/>
            <person name="Benos P.V."/>
            <person name="Berman B.P."/>
            <person name="Bhandari D."/>
            <person name="Bolshakov S."/>
            <person name="Borkova D."/>
            <person name="Botchan M.R."/>
            <person name="Bouck J."/>
            <person name="Brokstein P."/>
            <person name="Brottier P."/>
            <person name="Burtis K.C."/>
            <person name="Busam D.A."/>
            <person name="Butler H."/>
            <person name="Cadieu E."/>
            <person name="Center A."/>
            <person name="Chandra I."/>
            <person name="Cherry J.M."/>
            <person name="Cawley S."/>
            <person name="Dahlke C."/>
            <person name="Davenport L.B."/>
            <person name="Davies P."/>
            <person name="de Pablos B."/>
            <person name="Delcher A."/>
            <person name="Deng Z."/>
            <person name="Mays A.D."/>
            <person name="Dew I."/>
            <person name="Dietz S.M."/>
            <person name="Dodson K."/>
            <person name="Doup L.E."/>
            <person name="Downes M."/>
            <person name="Dugan-Rocha S."/>
            <person name="Dunkov B.C."/>
            <person name="Dunn P."/>
            <person name="Durbin K.J."/>
            <person name="Evangelista C.C."/>
            <person name="Ferraz C."/>
            <person name="Ferriera S."/>
            <person name="Fleischmann W."/>
            <person name="Fosler C."/>
            <person name="Gabrielian A.E."/>
            <person name="Garg N.S."/>
            <person name="Gelbart W.M."/>
            <person name="Glasser K."/>
            <person name="Glodek A."/>
            <person name="Gong F."/>
            <person name="Gorrell J.H."/>
            <person name="Gu Z."/>
            <person name="Guan P."/>
            <person name="Harris M."/>
            <person name="Harris N.L."/>
            <person name="Harvey D.A."/>
            <person name="Heiman T.J."/>
            <person name="Hernandez J.R."/>
            <person name="Houck J."/>
            <person name="Hostin D."/>
            <person name="Houston K.A."/>
            <person name="Howland T.J."/>
            <person name="Wei M.-H."/>
            <person name="Ibegwam C."/>
            <person name="Jalali M."/>
            <person name="Kalush F."/>
            <person name="Karpen G.H."/>
            <person name="Ke Z."/>
            <person name="Kennison J.A."/>
            <person name="Ketchum K.A."/>
            <person name="Kimmel B.E."/>
            <person name="Kodira C.D."/>
            <person name="Kraft C.L."/>
            <person name="Kravitz S."/>
            <person name="Kulp D."/>
            <person name="Lai Z."/>
            <person name="Lasko P."/>
            <person name="Lei Y."/>
            <person name="Levitsky A.A."/>
            <person name="Li J.H."/>
            <person name="Li Z."/>
            <person name="Liang Y."/>
            <person name="Lin X."/>
            <person name="Liu X."/>
            <person name="Mattei B."/>
            <person name="McIntosh T.C."/>
            <person name="McLeod M.P."/>
            <person name="McPherson D."/>
            <person name="Merkulov G."/>
            <person name="Milshina N.V."/>
            <person name="Mobarry C."/>
            <person name="Morris J."/>
            <person name="Moshrefi A."/>
            <person name="Mount S.M."/>
            <person name="Moy M."/>
            <person name="Murphy B."/>
            <person name="Murphy L."/>
            <person name="Muzny D.M."/>
            <person name="Nelson D.L."/>
            <person name="Nelson D.R."/>
            <person name="Nelson K.A."/>
            <person name="Nixon K."/>
            <person name="Nusskern D.R."/>
            <person name="Pacleb J.M."/>
            <person name="Palazzolo M."/>
            <person name="Pittman G.S."/>
            <person name="Pan S."/>
            <person name="Pollard J."/>
            <person name="Puri V."/>
            <person name="Reese M.G."/>
            <person name="Reinert K."/>
            <person name="Remington K."/>
            <person name="Saunders R.D.C."/>
            <person name="Scheeler F."/>
            <person name="Shen H."/>
            <person name="Shue B.C."/>
            <person name="Siden-Kiamos I."/>
            <person name="Simpson M."/>
            <person name="Skupski M.P."/>
            <person name="Smith T.J."/>
            <person name="Spier E."/>
            <person name="Spradling A.C."/>
            <person name="Stapleton M."/>
            <person name="Strong R."/>
            <person name="Sun E."/>
            <person name="Svirskas R."/>
            <person name="Tector C."/>
            <person name="Turner R."/>
            <person name="Venter E."/>
            <person name="Wang A.H."/>
            <person name="Wang X."/>
            <person name="Wang Z.-Y."/>
            <person name="Wassarman D.A."/>
            <person name="Weinstock G.M."/>
            <person name="Weissenbach J."/>
            <person name="Williams S.M."/>
            <person name="Woodage T."/>
            <person name="Worley K.C."/>
            <person name="Wu D."/>
            <person name="Yang S."/>
            <person name="Yao Q.A."/>
            <person name="Ye J."/>
            <person name="Yeh R.-F."/>
            <person name="Zaveri J.S."/>
            <person name="Zhan M."/>
            <person name="Zhang G."/>
            <person name="Zhao Q."/>
            <person name="Zheng L."/>
            <person name="Zheng X.H."/>
            <person name="Zhong F.N."/>
            <person name="Zhong W."/>
            <person name="Zhou X."/>
            <person name="Zhu S.C."/>
            <person name="Zhu X."/>
            <person name="Smith H.O."/>
            <person name="Gibbs R.A."/>
            <person name="Myers E.W."/>
            <person name="Rubin G.M."/>
            <person name="Venter J.C."/>
        </authorList>
    </citation>
    <scope>NUCLEOTIDE SEQUENCE [LARGE SCALE GENOMIC DNA]</scope>
    <source>
        <strain>Berkeley</strain>
    </source>
</reference>
<reference evidence="3" key="2">
    <citation type="journal article" date="2002" name="Genome Biol.">
        <title>Annotation of the Drosophila melanogaster euchromatic genome: a systematic review.</title>
        <authorList>
            <person name="Misra S."/>
            <person name="Crosby M.A."/>
            <person name="Mungall C.J."/>
            <person name="Matthews B.B."/>
            <person name="Campbell K.S."/>
            <person name="Hradecky P."/>
            <person name="Huang Y."/>
            <person name="Kaminker J.S."/>
            <person name="Millburn G.H."/>
            <person name="Prochnik S.E."/>
            <person name="Smith C.D."/>
            <person name="Tupy J.L."/>
            <person name="Whitfield E.J."/>
            <person name="Bayraktaroglu L."/>
            <person name="Berman B.P."/>
            <person name="Bettencourt B.R."/>
            <person name="Celniker S.E."/>
            <person name="de Grey A.D.N.J."/>
            <person name="Drysdale R.A."/>
            <person name="Harris N.L."/>
            <person name="Richter J."/>
            <person name="Russo S."/>
            <person name="Schroeder A.J."/>
            <person name="Shu S.Q."/>
            <person name="Stapleton M."/>
            <person name="Yamada C."/>
            <person name="Ashburner M."/>
            <person name="Gelbart W.M."/>
            <person name="Rubin G.M."/>
            <person name="Lewis S.E."/>
        </authorList>
    </citation>
    <scope>GENOME REANNOTATION</scope>
    <source>
        <strain>Berkeley</strain>
    </source>
</reference>
<reference evidence="3" key="3">
    <citation type="journal article" date="2000" name="Science">
        <title>Candidate taste receptors in Drosophila.</title>
        <authorList>
            <person name="Clyne P.J."/>
            <person name="Warr C.G."/>
            <person name="Carlson J.R."/>
        </authorList>
    </citation>
    <scope>IDENTIFICATION</scope>
</reference>